<reference key="1">
    <citation type="journal article" date="2001" name="Nature">
        <title>Massive gene decay in the leprosy bacillus.</title>
        <authorList>
            <person name="Cole S.T."/>
            <person name="Eiglmeier K."/>
            <person name="Parkhill J."/>
            <person name="James K.D."/>
            <person name="Thomson N.R."/>
            <person name="Wheeler P.R."/>
            <person name="Honore N."/>
            <person name="Garnier T."/>
            <person name="Churcher C.M."/>
            <person name="Harris D.E."/>
            <person name="Mungall K.L."/>
            <person name="Basham D."/>
            <person name="Brown D."/>
            <person name="Chillingworth T."/>
            <person name="Connor R."/>
            <person name="Davies R.M."/>
            <person name="Devlin K."/>
            <person name="Duthoy S."/>
            <person name="Feltwell T."/>
            <person name="Fraser A."/>
            <person name="Hamlin N."/>
            <person name="Holroyd S."/>
            <person name="Hornsby T."/>
            <person name="Jagels K."/>
            <person name="Lacroix C."/>
            <person name="Maclean J."/>
            <person name="Moule S."/>
            <person name="Murphy L.D."/>
            <person name="Oliver K."/>
            <person name="Quail M.A."/>
            <person name="Rajandream M.A."/>
            <person name="Rutherford K.M."/>
            <person name="Rutter S."/>
            <person name="Seeger K."/>
            <person name="Simon S."/>
            <person name="Simmonds M."/>
            <person name="Skelton J."/>
            <person name="Squares R."/>
            <person name="Squares S."/>
            <person name="Stevens K."/>
            <person name="Taylor K."/>
            <person name="Whitehead S."/>
            <person name="Woodward J.R."/>
            <person name="Barrell B.G."/>
        </authorList>
    </citation>
    <scope>NUCLEOTIDE SEQUENCE [LARGE SCALE GENOMIC DNA]</scope>
    <source>
        <strain>TN</strain>
    </source>
</reference>
<name>GCST_MYCLE</name>
<comment type="function">
    <text evidence="1">The glycine cleavage system catalyzes the degradation of glycine.</text>
</comment>
<comment type="catalytic activity">
    <reaction evidence="1">
        <text>N(6)-[(R)-S(8)-aminomethyldihydrolipoyl]-L-lysyl-[protein] + (6S)-5,6,7,8-tetrahydrofolate = N(6)-[(R)-dihydrolipoyl]-L-lysyl-[protein] + (6R)-5,10-methylene-5,6,7,8-tetrahydrofolate + NH4(+)</text>
        <dbReference type="Rhea" id="RHEA:16945"/>
        <dbReference type="Rhea" id="RHEA-COMP:10475"/>
        <dbReference type="Rhea" id="RHEA-COMP:10492"/>
        <dbReference type="ChEBI" id="CHEBI:15636"/>
        <dbReference type="ChEBI" id="CHEBI:28938"/>
        <dbReference type="ChEBI" id="CHEBI:57453"/>
        <dbReference type="ChEBI" id="CHEBI:83100"/>
        <dbReference type="ChEBI" id="CHEBI:83143"/>
        <dbReference type="EC" id="2.1.2.10"/>
    </reaction>
</comment>
<comment type="subunit">
    <text evidence="1">The glycine cleavage system is composed of four proteins: P, T, L and H.</text>
</comment>
<comment type="similarity">
    <text evidence="1">Belongs to the GcvT family.</text>
</comment>
<keyword id="KW-0032">Aminotransferase</keyword>
<keyword id="KW-1185">Reference proteome</keyword>
<keyword id="KW-0808">Transferase</keyword>
<feature type="chain" id="PRO_0000122572" description="Aminomethyltransferase">
    <location>
        <begin position="1"/>
        <end position="367"/>
    </location>
</feature>
<organism>
    <name type="scientific">Mycobacterium leprae (strain TN)</name>
    <dbReference type="NCBI Taxonomy" id="272631"/>
    <lineage>
        <taxon>Bacteria</taxon>
        <taxon>Bacillati</taxon>
        <taxon>Actinomycetota</taxon>
        <taxon>Actinomycetes</taxon>
        <taxon>Mycobacteriales</taxon>
        <taxon>Mycobacteriaceae</taxon>
        <taxon>Mycobacterium</taxon>
    </lineage>
</organism>
<evidence type="ECO:0000255" key="1">
    <source>
        <dbReference type="HAMAP-Rule" id="MF_00259"/>
    </source>
</evidence>
<dbReference type="EC" id="2.1.2.10" evidence="1"/>
<dbReference type="EMBL" id="Z98741">
    <property type="protein sequence ID" value="CAB11378.1"/>
    <property type="molecule type" value="Genomic_DNA"/>
</dbReference>
<dbReference type="EMBL" id="AL583920">
    <property type="protein sequence ID" value="CAC31246.1"/>
    <property type="molecule type" value="Genomic_DNA"/>
</dbReference>
<dbReference type="PIR" id="T44888">
    <property type="entry name" value="T44888"/>
</dbReference>
<dbReference type="RefSeq" id="NP_301653.1">
    <property type="nucleotide sequence ID" value="NC_002677.1"/>
</dbReference>
<dbReference type="RefSeq" id="WP_010907977.1">
    <property type="nucleotide sequence ID" value="NC_002677.1"/>
</dbReference>
<dbReference type="SMR" id="O32955"/>
<dbReference type="STRING" id="272631.gene:17574691"/>
<dbReference type="KEGG" id="mle:ML0865"/>
<dbReference type="PATRIC" id="fig|272631.5.peg.1592"/>
<dbReference type="Leproma" id="ML0865"/>
<dbReference type="eggNOG" id="COG0404">
    <property type="taxonomic scope" value="Bacteria"/>
</dbReference>
<dbReference type="HOGENOM" id="CLU_007884_10_2_11"/>
<dbReference type="OrthoDB" id="9774591at2"/>
<dbReference type="Proteomes" id="UP000000806">
    <property type="component" value="Chromosome"/>
</dbReference>
<dbReference type="GO" id="GO:0005829">
    <property type="term" value="C:cytosol"/>
    <property type="evidence" value="ECO:0007669"/>
    <property type="project" value="TreeGrafter"/>
</dbReference>
<dbReference type="GO" id="GO:0005960">
    <property type="term" value="C:glycine cleavage complex"/>
    <property type="evidence" value="ECO:0007669"/>
    <property type="project" value="InterPro"/>
</dbReference>
<dbReference type="GO" id="GO:0004047">
    <property type="term" value="F:aminomethyltransferase activity"/>
    <property type="evidence" value="ECO:0007669"/>
    <property type="project" value="UniProtKB-UniRule"/>
</dbReference>
<dbReference type="GO" id="GO:0008483">
    <property type="term" value="F:transaminase activity"/>
    <property type="evidence" value="ECO:0007669"/>
    <property type="project" value="UniProtKB-KW"/>
</dbReference>
<dbReference type="GO" id="GO:0019464">
    <property type="term" value="P:glycine decarboxylation via glycine cleavage system"/>
    <property type="evidence" value="ECO:0007669"/>
    <property type="project" value="UniProtKB-UniRule"/>
</dbReference>
<dbReference type="FunFam" id="3.30.70.1400:FF:000001">
    <property type="entry name" value="Aminomethyltransferase"/>
    <property type="match status" value="1"/>
</dbReference>
<dbReference type="FunFam" id="4.10.1250.10:FF:000001">
    <property type="entry name" value="Aminomethyltransferase"/>
    <property type="match status" value="1"/>
</dbReference>
<dbReference type="Gene3D" id="3.30.1360.120">
    <property type="entry name" value="Probable tRNA modification gtpase trme, domain 1"/>
    <property type="match status" value="1"/>
</dbReference>
<dbReference type="HAMAP" id="MF_00259">
    <property type="entry name" value="GcvT"/>
    <property type="match status" value="1"/>
</dbReference>
<dbReference type="InterPro" id="IPR006223">
    <property type="entry name" value="GCS_T"/>
</dbReference>
<dbReference type="InterPro" id="IPR022903">
    <property type="entry name" value="GCS_T_bac"/>
</dbReference>
<dbReference type="InterPro" id="IPR013977">
    <property type="entry name" value="GCST_C"/>
</dbReference>
<dbReference type="InterPro" id="IPR006222">
    <property type="entry name" value="GCV_T_N"/>
</dbReference>
<dbReference type="InterPro" id="IPR028896">
    <property type="entry name" value="GcvT/YgfZ/DmdA"/>
</dbReference>
<dbReference type="InterPro" id="IPR029043">
    <property type="entry name" value="GcvT/YgfZ_C"/>
</dbReference>
<dbReference type="InterPro" id="IPR027266">
    <property type="entry name" value="TrmE/GcvT_dom1"/>
</dbReference>
<dbReference type="NCBIfam" id="TIGR00528">
    <property type="entry name" value="gcvT"/>
    <property type="match status" value="1"/>
</dbReference>
<dbReference type="NCBIfam" id="NF001567">
    <property type="entry name" value="PRK00389.1"/>
    <property type="match status" value="1"/>
</dbReference>
<dbReference type="PANTHER" id="PTHR43757">
    <property type="entry name" value="AMINOMETHYLTRANSFERASE"/>
    <property type="match status" value="1"/>
</dbReference>
<dbReference type="PANTHER" id="PTHR43757:SF2">
    <property type="entry name" value="AMINOMETHYLTRANSFERASE, MITOCHONDRIAL"/>
    <property type="match status" value="1"/>
</dbReference>
<dbReference type="Pfam" id="PF01571">
    <property type="entry name" value="GCV_T"/>
    <property type="match status" value="1"/>
</dbReference>
<dbReference type="Pfam" id="PF08669">
    <property type="entry name" value="GCV_T_C"/>
    <property type="match status" value="1"/>
</dbReference>
<dbReference type="PIRSF" id="PIRSF006487">
    <property type="entry name" value="GcvT"/>
    <property type="match status" value="1"/>
</dbReference>
<dbReference type="SUPFAM" id="SSF101790">
    <property type="entry name" value="Aminomethyltransferase beta-barrel domain"/>
    <property type="match status" value="1"/>
</dbReference>
<dbReference type="SUPFAM" id="SSF103025">
    <property type="entry name" value="Folate-binding domain"/>
    <property type="match status" value="1"/>
</dbReference>
<sequence>MTDAPELLKGPLEDRHRELGANFAEFGGWLMPVSYAGTVSEHSATRNAVGLFDVSHLGKALVRGPGAAQFVNSVLTNDLGRIRPGKAQYTLCCSESGGVIDDLIAYYVDDDEIFLVSNAANTAAVVDALQAVVPAGLTIINQHRSHAVLAVQGPRSTDVLGELGLPTGIDYMGYVDASYAGVPVRVCRTGYTGEQGYELLPPWESADVVFDALVAAVVDARGEPAGLGARDTLRTEMGYPLYGHELSLDISPLQARCGWAIGWKKDAFLGRDALLAEKAAGPRRLLRGLRMAGRGVLRPGLTVCAGDIPIGVTTSGTFSPTLQVGVALALIDSEAAVQDGQQIIVDVRGRAVECEVVRPPFIEVKTR</sequence>
<proteinExistence type="inferred from homology"/>
<protein>
    <recommendedName>
        <fullName evidence="1">Aminomethyltransferase</fullName>
        <ecNumber evidence="1">2.1.2.10</ecNumber>
    </recommendedName>
    <alternativeName>
        <fullName evidence="1">Glycine cleavage system T protein</fullName>
    </alternativeName>
</protein>
<gene>
    <name evidence="1" type="primary">gcvT</name>
    <name type="ordered locus">ML0865</name>
    <name type="ORF">MLCB22.13c</name>
</gene>
<accession>O32955</accession>